<evidence type="ECO:0000250" key="1"/>
<evidence type="ECO:0000255" key="2"/>
<evidence type="ECO:0000255" key="3">
    <source>
        <dbReference type="PROSITE-ProRule" id="PRU00716"/>
    </source>
</evidence>
<evidence type="ECO:0000305" key="4"/>
<feature type="transit peptide" description="Chloroplast" evidence="2">
    <location>
        <begin position="1"/>
        <end position="60"/>
    </location>
</feature>
<feature type="chain" id="PRO_0000019416" description="Ferredoxin--NADP reductase, root-type isozyme, chloroplastic">
    <location>
        <begin position="61"/>
        <end position="375"/>
    </location>
</feature>
<feature type="domain" description="FAD-binding FR-type" evidence="3">
    <location>
        <begin position="91"/>
        <end position="219"/>
    </location>
</feature>
<feature type="binding site" evidence="1">
    <location>
        <begin position="151"/>
        <end position="154"/>
    </location>
    <ligand>
        <name>FAD</name>
        <dbReference type="ChEBI" id="CHEBI:57692"/>
    </ligand>
</feature>
<feature type="binding site" evidence="1">
    <location>
        <begin position="172"/>
        <end position="174"/>
    </location>
    <ligand>
        <name>FAD</name>
        <dbReference type="ChEBI" id="CHEBI:57692"/>
    </ligand>
</feature>
<feature type="binding site" evidence="1">
    <location>
        <position position="174"/>
    </location>
    <ligand>
        <name>NADP(+)</name>
        <dbReference type="ChEBI" id="CHEBI:58349"/>
    </ligand>
</feature>
<feature type="binding site" evidence="1">
    <location>
        <position position="178"/>
    </location>
    <ligand>
        <name>FAD</name>
        <dbReference type="ChEBI" id="CHEBI:57692"/>
    </ligand>
</feature>
<feature type="binding site" evidence="1">
    <location>
        <begin position="193"/>
        <end position="195"/>
    </location>
    <ligand>
        <name>FAD</name>
        <dbReference type="ChEBI" id="CHEBI:57692"/>
    </ligand>
</feature>
<feature type="binding site" evidence="1">
    <location>
        <position position="235"/>
    </location>
    <ligand>
        <name>FAD</name>
        <dbReference type="ChEBI" id="CHEBI:57692"/>
    </ligand>
</feature>
<feature type="binding site" evidence="1">
    <location>
        <position position="235"/>
    </location>
    <ligand>
        <name>NADP(+)</name>
        <dbReference type="ChEBI" id="CHEBI:58349"/>
    </ligand>
</feature>
<feature type="binding site" evidence="1">
    <location>
        <begin position="266"/>
        <end position="267"/>
    </location>
    <ligand>
        <name>NADP(+)</name>
        <dbReference type="ChEBI" id="CHEBI:58349"/>
    </ligand>
</feature>
<feature type="binding site" evidence="1">
    <location>
        <begin position="296"/>
        <end position="297"/>
    </location>
    <ligand>
        <name>NADP(+)</name>
        <dbReference type="ChEBI" id="CHEBI:58349"/>
    </ligand>
</feature>
<feature type="binding site" evidence="1">
    <location>
        <position position="306"/>
    </location>
    <ligand>
        <name>NADP(+)</name>
        <dbReference type="ChEBI" id="CHEBI:58349"/>
    </ligand>
</feature>
<feature type="binding site" evidence="1">
    <location>
        <begin position="334"/>
        <end position="335"/>
    </location>
    <ligand>
        <name>NADP(+)</name>
        <dbReference type="ChEBI" id="CHEBI:58349"/>
    </ligand>
</feature>
<feature type="binding site" evidence="1">
    <location>
        <position position="373"/>
    </location>
    <ligand>
        <name>NADP(+)</name>
        <dbReference type="ChEBI" id="CHEBI:58349"/>
    </ligand>
</feature>
<reference key="1">
    <citation type="online journal article" date="1998" name="Plant Gene Register">
        <title>Nucleotide sequence of a ferredoxin-NADP+ oxidoreductase cDNA from cultured tobacco cells.</title>
        <authorList>
            <person name="Kumada H.O."/>
            <person name="Aoki H."/>
            <person name="Doyama N."/>
            <person name="Ida S."/>
        </authorList>
        <locator>PGR98-038</locator>
    </citation>
    <scope>NUCLEOTIDE SEQUENCE [MRNA]</scope>
    <source>
        <strain>cv. Bright Yellow 2</strain>
    </source>
</reference>
<organism>
    <name type="scientific">Nicotiana tabacum</name>
    <name type="common">Common tobacco</name>
    <dbReference type="NCBI Taxonomy" id="4097"/>
    <lineage>
        <taxon>Eukaryota</taxon>
        <taxon>Viridiplantae</taxon>
        <taxon>Streptophyta</taxon>
        <taxon>Embryophyta</taxon>
        <taxon>Tracheophyta</taxon>
        <taxon>Spermatophyta</taxon>
        <taxon>Magnoliopsida</taxon>
        <taxon>eudicotyledons</taxon>
        <taxon>Gunneridae</taxon>
        <taxon>Pentapetalae</taxon>
        <taxon>asterids</taxon>
        <taxon>lamiids</taxon>
        <taxon>Solanales</taxon>
        <taxon>Solanaceae</taxon>
        <taxon>Nicotianoideae</taxon>
        <taxon>Nicotianeae</taxon>
        <taxon>Nicotiana</taxon>
    </lineage>
</organism>
<proteinExistence type="evidence at transcript level"/>
<name>FENR2_TOBAC</name>
<sequence length="375" mass="41958">MAHSALSQVSVAVPLQTDSSFRRSTFKATSITFSDRSSWISMPPIDLKAAPSRNQHIVCMSVQQASKAKVSVSPLSLEDAKEPPLNIYKPKEPYTATIVSVERLVGPKAPGETCHIVIDHDGNLPYWEGQSYGVIPPGENPKKPGNPHNVRLYLIASTRYGDSFDGKTASLCVRRAVYYDPETGKEDPSKNGVCSNFLCDSKPGDKVKITGPSGKIMLLPEEIPNATHIMIGTGTGVAPFRGYLRRMFMESVPTKFNGLAWLFLGVANTDSLLYDDEFTKYLNDYPGNFRYDRALSREQKNNKGGKMYVQDKIEEYSDEIFKLLDEGAHIYFCGLKGMMPGIQDTLKRVAERRGESWEQKLSQLKKNKQWHVEVY</sequence>
<accession>O04397</accession>
<comment type="function">
    <text>May play a key role in regulating the relative amounts of cyclic and non-cyclic electron flow to meet the demands of the plant for ATP and reducing power. Is involved in nitrate assimilation.</text>
</comment>
<comment type="catalytic activity">
    <reaction>
        <text>2 reduced [2Fe-2S]-[ferredoxin] + NADP(+) + H(+) = 2 oxidized [2Fe-2S]-[ferredoxin] + NADPH</text>
        <dbReference type="Rhea" id="RHEA:20125"/>
        <dbReference type="Rhea" id="RHEA-COMP:10000"/>
        <dbReference type="Rhea" id="RHEA-COMP:10001"/>
        <dbReference type="ChEBI" id="CHEBI:15378"/>
        <dbReference type="ChEBI" id="CHEBI:33737"/>
        <dbReference type="ChEBI" id="CHEBI:33738"/>
        <dbReference type="ChEBI" id="CHEBI:57783"/>
        <dbReference type="ChEBI" id="CHEBI:58349"/>
        <dbReference type="EC" id="1.18.1.2"/>
    </reaction>
</comment>
<comment type="cofactor">
    <cofactor>
        <name>FAD</name>
        <dbReference type="ChEBI" id="CHEBI:57692"/>
    </cofactor>
</comment>
<comment type="pathway">
    <text>Energy metabolism; photosynthesis.</text>
</comment>
<comment type="subcellular location">
    <subcellularLocation>
        <location evidence="1">Plastid</location>
        <location evidence="1">Chloroplast</location>
    </subcellularLocation>
</comment>
<comment type="similarity">
    <text evidence="4">Belongs to the ferredoxin--NADP reductase type 1 family.</text>
</comment>
<keyword id="KW-0150">Chloroplast</keyword>
<keyword id="KW-0249">Electron transport</keyword>
<keyword id="KW-0274">FAD</keyword>
<keyword id="KW-0285">Flavoprotein</keyword>
<keyword id="KW-0521">NADP</keyword>
<keyword id="KW-0560">Oxidoreductase</keyword>
<keyword id="KW-0602">Photosynthesis</keyword>
<keyword id="KW-0934">Plastid</keyword>
<keyword id="KW-1185">Reference proteome</keyword>
<keyword id="KW-0809">Transit peptide</keyword>
<keyword id="KW-0813">Transport</keyword>
<protein>
    <recommendedName>
        <fullName>Ferredoxin--NADP reductase, root-type isozyme, chloroplastic</fullName>
        <shortName>FNR</shortName>
        <ecNumber>1.18.1.2</ecNumber>
    </recommendedName>
</protein>
<dbReference type="EC" id="1.18.1.2"/>
<dbReference type="EMBL" id="AB004307">
    <property type="protein sequence ID" value="BAA20365.1"/>
    <property type="molecule type" value="mRNA"/>
</dbReference>
<dbReference type="PIR" id="T02215">
    <property type="entry name" value="T02215"/>
</dbReference>
<dbReference type="RefSeq" id="NP_001313084.1">
    <property type="nucleotide sequence ID" value="NM_001326155.1"/>
</dbReference>
<dbReference type="SMR" id="O04397"/>
<dbReference type="STRING" id="4097.O04397"/>
<dbReference type="PaxDb" id="4097-O04397"/>
<dbReference type="GeneID" id="107825625"/>
<dbReference type="KEGG" id="nta:107825625"/>
<dbReference type="OrthoDB" id="1688044at2759"/>
<dbReference type="UniPathway" id="UPA00091"/>
<dbReference type="Proteomes" id="UP000084051">
    <property type="component" value="Unplaced"/>
</dbReference>
<dbReference type="GO" id="GO:0009507">
    <property type="term" value="C:chloroplast"/>
    <property type="evidence" value="ECO:0007669"/>
    <property type="project" value="UniProtKB-SubCell"/>
</dbReference>
<dbReference type="GO" id="GO:0004324">
    <property type="term" value="F:ferredoxin-NADP+ reductase activity"/>
    <property type="evidence" value="ECO:0007669"/>
    <property type="project" value="UniProtKB-EC"/>
</dbReference>
<dbReference type="GO" id="GO:0015979">
    <property type="term" value="P:photosynthesis"/>
    <property type="evidence" value="ECO:0007669"/>
    <property type="project" value="UniProtKB-UniPathway"/>
</dbReference>
<dbReference type="CDD" id="cd06208">
    <property type="entry name" value="CYPOR_like_FNR"/>
    <property type="match status" value="1"/>
</dbReference>
<dbReference type="FunFam" id="2.40.30.10:FF:000048">
    <property type="entry name" value="Ferredoxin--NADP reductase, chloroplastic"/>
    <property type="match status" value="1"/>
</dbReference>
<dbReference type="FunFam" id="3.40.50.80:FF:000008">
    <property type="entry name" value="Ferredoxin--NADP reductase, chloroplastic"/>
    <property type="match status" value="1"/>
</dbReference>
<dbReference type="Gene3D" id="3.40.50.80">
    <property type="entry name" value="Nucleotide-binding domain of ferredoxin-NADP reductase (FNR) module"/>
    <property type="match status" value="1"/>
</dbReference>
<dbReference type="Gene3D" id="2.40.30.10">
    <property type="entry name" value="Translation factors"/>
    <property type="match status" value="1"/>
</dbReference>
<dbReference type="InterPro" id="IPR017927">
    <property type="entry name" value="FAD-bd_FR_type"/>
</dbReference>
<dbReference type="InterPro" id="IPR001709">
    <property type="entry name" value="Flavoprot_Pyr_Nucl_cyt_Rdtase"/>
</dbReference>
<dbReference type="InterPro" id="IPR015701">
    <property type="entry name" value="FNR"/>
</dbReference>
<dbReference type="InterPro" id="IPR039261">
    <property type="entry name" value="FNR_nucleotide-bd"/>
</dbReference>
<dbReference type="InterPro" id="IPR035442">
    <property type="entry name" value="FNR_plant_Cyanobacteria"/>
</dbReference>
<dbReference type="InterPro" id="IPR001433">
    <property type="entry name" value="OxRdtase_FAD/NAD-bd"/>
</dbReference>
<dbReference type="InterPro" id="IPR017938">
    <property type="entry name" value="Riboflavin_synthase-like_b-brl"/>
</dbReference>
<dbReference type="PANTHER" id="PTHR43314">
    <property type="match status" value="1"/>
</dbReference>
<dbReference type="Pfam" id="PF00175">
    <property type="entry name" value="NAD_binding_1"/>
    <property type="match status" value="1"/>
</dbReference>
<dbReference type="PIRSF" id="PIRSF501178">
    <property type="entry name" value="FNR-PetH"/>
    <property type="match status" value="1"/>
</dbReference>
<dbReference type="PIRSF" id="PIRSF000361">
    <property type="entry name" value="Frd-NADP+_RD"/>
    <property type="match status" value="1"/>
</dbReference>
<dbReference type="PRINTS" id="PR00371">
    <property type="entry name" value="FPNCR"/>
</dbReference>
<dbReference type="SUPFAM" id="SSF52343">
    <property type="entry name" value="Ferredoxin reductase-like, C-terminal NADP-linked domain"/>
    <property type="match status" value="1"/>
</dbReference>
<dbReference type="SUPFAM" id="SSF63380">
    <property type="entry name" value="Riboflavin synthase domain-like"/>
    <property type="match status" value="1"/>
</dbReference>
<dbReference type="PROSITE" id="PS51384">
    <property type="entry name" value="FAD_FR"/>
    <property type="match status" value="1"/>
</dbReference>